<comment type="function">
    <text evidence="1">A key translational regulator that binds mRNA to regulate translation initiation and/or mRNA stability. Mediates global changes in gene expression, shifting from rapid growth to stress survival by linking envelope stress, the stringent response and the catabolite repression systems. Usually binds in the 5'-UTR; binding at or near the Shine-Dalgarno sequence prevents ribosome-binding, repressing translation, binding elsewhere in the 5'-UTR can activate translation and/or stabilize the mRNA. Its function is antagonized by small RNA(s).</text>
</comment>
<comment type="subunit">
    <text evidence="1">Homodimer; the beta-strands of each monomer intercalate to form a hydrophobic core, while the alpha-helices form wings that extend away from the core.</text>
</comment>
<comment type="subcellular location">
    <subcellularLocation>
        <location evidence="1">Cytoplasm</location>
    </subcellularLocation>
</comment>
<comment type="similarity">
    <text evidence="1">Belongs to the CsrA/RsmA family.</text>
</comment>
<accession>A5IGC8</accession>
<feature type="chain" id="PRO_1000023394" description="Translational regulator CsrA">
    <location>
        <begin position="1"/>
        <end position="64"/>
    </location>
</feature>
<protein>
    <recommendedName>
        <fullName evidence="1">Translational regulator CsrA</fullName>
    </recommendedName>
    <alternativeName>
        <fullName evidence="1">Carbon storage regulator</fullName>
    </alternativeName>
</protein>
<sequence>MLILTRRIGETLIIGDDVNITVLGVKGNQVRLGINAPKDVSVHREEIYLRIQQEKESDDSEQAV</sequence>
<name>CSRA_LEGPC</name>
<reference key="1">
    <citation type="submission" date="2006-11" db="EMBL/GenBank/DDBJ databases">
        <title>Identification and characterization of a new conjugation/ type IVA secretion system (trb/tra) of L. pneumophila Corby localized on a mobile genomic island.</title>
        <authorList>
            <person name="Gloeckner G."/>
            <person name="Albert-Weissenberger C."/>
            <person name="Weinmann E."/>
            <person name="Jacobi S."/>
            <person name="Schunder E."/>
            <person name="Steinert M."/>
            <person name="Buchrieser C."/>
            <person name="Hacker J."/>
            <person name="Heuner K."/>
        </authorList>
    </citation>
    <scope>NUCLEOTIDE SEQUENCE [LARGE SCALE GENOMIC DNA]</scope>
    <source>
        <strain>Corby</strain>
    </source>
</reference>
<proteinExistence type="inferred from homology"/>
<keyword id="KW-0010">Activator</keyword>
<keyword id="KW-0963">Cytoplasm</keyword>
<keyword id="KW-0678">Repressor</keyword>
<keyword id="KW-0694">RNA-binding</keyword>
<keyword id="KW-0810">Translation regulation</keyword>
<gene>
    <name evidence="1" type="primary">csrA</name>
    <name type="ordered locus">LPC_2513</name>
</gene>
<dbReference type="EMBL" id="CP000675">
    <property type="protein sequence ID" value="ABQ56428.1"/>
    <property type="molecule type" value="Genomic_DNA"/>
</dbReference>
<dbReference type="RefSeq" id="WP_011213314.1">
    <property type="nucleotide sequence ID" value="NZ_JAPMSS010000014.1"/>
</dbReference>
<dbReference type="SMR" id="A5IGC8"/>
<dbReference type="GeneID" id="57034771"/>
<dbReference type="KEGG" id="lpc:LPC_2513"/>
<dbReference type="HOGENOM" id="CLU_164837_2_1_6"/>
<dbReference type="GO" id="GO:0005829">
    <property type="term" value="C:cytosol"/>
    <property type="evidence" value="ECO:0007669"/>
    <property type="project" value="TreeGrafter"/>
</dbReference>
<dbReference type="GO" id="GO:0048027">
    <property type="term" value="F:mRNA 5'-UTR binding"/>
    <property type="evidence" value="ECO:0007669"/>
    <property type="project" value="UniProtKB-UniRule"/>
</dbReference>
<dbReference type="GO" id="GO:0006402">
    <property type="term" value="P:mRNA catabolic process"/>
    <property type="evidence" value="ECO:0007669"/>
    <property type="project" value="InterPro"/>
</dbReference>
<dbReference type="GO" id="GO:0045947">
    <property type="term" value="P:negative regulation of translational initiation"/>
    <property type="evidence" value="ECO:0007669"/>
    <property type="project" value="UniProtKB-UniRule"/>
</dbReference>
<dbReference type="GO" id="GO:0045948">
    <property type="term" value="P:positive regulation of translational initiation"/>
    <property type="evidence" value="ECO:0007669"/>
    <property type="project" value="UniProtKB-UniRule"/>
</dbReference>
<dbReference type="GO" id="GO:0006109">
    <property type="term" value="P:regulation of carbohydrate metabolic process"/>
    <property type="evidence" value="ECO:0007669"/>
    <property type="project" value="UniProtKB-UniRule"/>
</dbReference>
<dbReference type="FunFam" id="2.60.40.4380:FF:000001">
    <property type="entry name" value="Translational regulator CsrA"/>
    <property type="match status" value="1"/>
</dbReference>
<dbReference type="Gene3D" id="2.60.40.4380">
    <property type="entry name" value="Translational regulator CsrA"/>
    <property type="match status" value="1"/>
</dbReference>
<dbReference type="HAMAP" id="MF_00167">
    <property type="entry name" value="CsrA"/>
    <property type="match status" value="1"/>
</dbReference>
<dbReference type="InterPro" id="IPR003751">
    <property type="entry name" value="CsrA"/>
</dbReference>
<dbReference type="InterPro" id="IPR036107">
    <property type="entry name" value="CsrA_sf"/>
</dbReference>
<dbReference type="NCBIfam" id="TIGR00202">
    <property type="entry name" value="csrA"/>
    <property type="match status" value="1"/>
</dbReference>
<dbReference type="NCBIfam" id="NF002469">
    <property type="entry name" value="PRK01712.1"/>
    <property type="match status" value="1"/>
</dbReference>
<dbReference type="PANTHER" id="PTHR34984">
    <property type="entry name" value="CARBON STORAGE REGULATOR"/>
    <property type="match status" value="1"/>
</dbReference>
<dbReference type="PANTHER" id="PTHR34984:SF1">
    <property type="entry name" value="CARBON STORAGE REGULATOR"/>
    <property type="match status" value="1"/>
</dbReference>
<dbReference type="Pfam" id="PF02599">
    <property type="entry name" value="CsrA"/>
    <property type="match status" value="1"/>
</dbReference>
<dbReference type="SUPFAM" id="SSF117130">
    <property type="entry name" value="CsrA-like"/>
    <property type="match status" value="1"/>
</dbReference>
<evidence type="ECO:0000255" key="1">
    <source>
        <dbReference type="HAMAP-Rule" id="MF_00167"/>
    </source>
</evidence>
<organism>
    <name type="scientific">Legionella pneumophila (strain Corby)</name>
    <dbReference type="NCBI Taxonomy" id="400673"/>
    <lineage>
        <taxon>Bacteria</taxon>
        <taxon>Pseudomonadati</taxon>
        <taxon>Pseudomonadota</taxon>
        <taxon>Gammaproteobacteria</taxon>
        <taxon>Legionellales</taxon>
        <taxon>Legionellaceae</taxon>
        <taxon>Legionella</taxon>
    </lineage>
</organism>